<gene>
    <name evidence="1" type="primary">metN</name>
    <name type="ordered locus">LLNZ_01785</name>
</gene>
<accession>D8KFN1</accession>
<accession>A2RI53</accession>
<accession>Q9RLV5</accession>
<evidence type="ECO:0000255" key="1">
    <source>
        <dbReference type="HAMAP-Rule" id="MF_01719"/>
    </source>
</evidence>
<sequence length="368" mass="40987">MTAIIELNNLSVQFHQKGRLVTAVKNATLHIEKGDIYGVIGYSGAGKSTLVRTINLLQKPTEGQIVINGEKIFDSENPVKFTGAKLREFRQKIGMIFQHFNLLSEKTVFNNVAFALQHSQIEDKNGKKRYLTKKEKNDKVTELLKLVDLADLSDKYPAQLSGGQKQRVAIARALANDPEILISDEGTSALDPKTTNQILDLLKSLHEKLGITVVLITHEMQVVKEIANKVAVMQNGEIIEQNSLIDIFAQPKEALTKQFIETTSSVNRFIASLSKTELLAQLADDEELIHLDYSGSELEDPVVSDITKKFDVTTNIFYGNVELLQGQPFGSLVLTLKGSSEHRAAAKAYFVERHLKFEVLGKIERTVD</sequence>
<feature type="chain" id="PRO_0000402183" description="Methionine import ATP-binding protein MetN">
    <location>
        <begin position="1"/>
        <end position="368"/>
    </location>
</feature>
<feature type="domain" description="ABC transporter" evidence="1">
    <location>
        <begin position="5"/>
        <end position="260"/>
    </location>
</feature>
<feature type="binding site" evidence="1">
    <location>
        <begin position="41"/>
        <end position="48"/>
    </location>
    <ligand>
        <name>ATP</name>
        <dbReference type="ChEBI" id="CHEBI:30616"/>
    </ligand>
</feature>
<protein>
    <recommendedName>
        <fullName evidence="1">Methionine import ATP-binding protein MetN</fullName>
        <ecNumber evidence="1">7.4.2.11</ecNumber>
    </recommendedName>
</protein>
<keyword id="KW-0029">Amino-acid transport</keyword>
<keyword id="KW-0067">ATP-binding</keyword>
<keyword id="KW-1003">Cell membrane</keyword>
<keyword id="KW-0472">Membrane</keyword>
<keyword id="KW-0547">Nucleotide-binding</keyword>
<keyword id="KW-1278">Translocase</keyword>
<keyword id="KW-0813">Transport</keyword>
<proteinExistence type="inferred from homology"/>
<organism>
    <name type="scientific">Lactococcus lactis subsp. cremoris (strain NZ9000)</name>
    <dbReference type="NCBI Taxonomy" id="746361"/>
    <lineage>
        <taxon>Bacteria</taxon>
        <taxon>Bacillati</taxon>
        <taxon>Bacillota</taxon>
        <taxon>Bacilli</taxon>
        <taxon>Lactobacillales</taxon>
        <taxon>Streptococcaceae</taxon>
        <taxon>Lactococcus</taxon>
        <taxon>Lactococcus cremoris subsp. cremoris</taxon>
    </lineage>
</organism>
<comment type="function">
    <text evidence="1">Part of the ABC transporter complex MetNIQ involved in methionine import. Responsible for energy coupling to the transport system.</text>
</comment>
<comment type="catalytic activity">
    <reaction evidence="1">
        <text>L-methionine(out) + ATP + H2O = L-methionine(in) + ADP + phosphate + H(+)</text>
        <dbReference type="Rhea" id="RHEA:29779"/>
        <dbReference type="ChEBI" id="CHEBI:15377"/>
        <dbReference type="ChEBI" id="CHEBI:15378"/>
        <dbReference type="ChEBI" id="CHEBI:30616"/>
        <dbReference type="ChEBI" id="CHEBI:43474"/>
        <dbReference type="ChEBI" id="CHEBI:57844"/>
        <dbReference type="ChEBI" id="CHEBI:456216"/>
        <dbReference type="EC" id="7.4.2.11"/>
    </reaction>
</comment>
<comment type="catalytic activity">
    <reaction evidence="1">
        <text>D-methionine(out) + ATP + H2O = D-methionine(in) + ADP + phosphate + H(+)</text>
        <dbReference type="Rhea" id="RHEA:29767"/>
        <dbReference type="ChEBI" id="CHEBI:15377"/>
        <dbReference type="ChEBI" id="CHEBI:15378"/>
        <dbReference type="ChEBI" id="CHEBI:30616"/>
        <dbReference type="ChEBI" id="CHEBI:43474"/>
        <dbReference type="ChEBI" id="CHEBI:57932"/>
        <dbReference type="ChEBI" id="CHEBI:456216"/>
        <dbReference type="EC" id="7.4.2.11"/>
    </reaction>
</comment>
<comment type="subunit">
    <text evidence="1">The complex is composed of two ATP-binding proteins (MetN), two transmembrane proteins (MetI) and a solute-binding protein (MetQ).</text>
</comment>
<comment type="subcellular location">
    <subcellularLocation>
        <location evidence="1">Cell membrane</location>
        <topology evidence="1">Peripheral membrane protein</topology>
    </subcellularLocation>
</comment>
<comment type="similarity">
    <text evidence="1">Belongs to the ABC transporter superfamily. Methionine importer (TC 3.A.1.24) family.</text>
</comment>
<dbReference type="EC" id="7.4.2.11" evidence="1"/>
<dbReference type="EMBL" id="AJ012388">
    <property type="protein sequence ID" value="CAB59828.1"/>
    <property type="molecule type" value="Genomic_DNA"/>
</dbReference>
<dbReference type="EMBL" id="CP002094">
    <property type="protein sequence ID" value="ADJ59361.1"/>
    <property type="molecule type" value="Genomic_DNA"/>
</dbReference>
<dbReference type="RefSeq" id="WP_011834402.1">
    <property type="nucleotide sequence ID" value="NC_017949.1"/>
</dbReference>
<dbReference type="SMR" id="D8KFN1"/>
<dbReference type="KEGG" id="lln:LLNZ_01785"/>
<dbReference type="PATRIC" id="fig|746361.3.peg.350"/>
<dbReference type="HOGENOM" id="CLU_000604_1_3_9"/>
<dbReference type="GO" id="GO:0005886">
    <property type="term" value="C:plasma membrane"/>
    <property type="evidence" value="ECO:0007669"/>
    <property type="project" value="UniProtKB-SubCell"/>
</dbReference>
<dbReference type="GO" id="GO:0033232">
    <property type="term" value="F:ABC-type D-methionine transporter activity"/>
    <property type="evidence" value="ECO:0007669"/>
    <property type="project" value="UniProtKB-EC"/>
</dbReference>
<dbReference type="GO" id="GO:0005524">
    <property type="term" value="F:ATP binding"/>
    <property type="evidence" value="ECO:0007669"/>
    <property type="project" value="UniProtKB-KW"/>
</dbReference>
<dbReference type="GO" id="GO:0016887">
    <property type="term" value="F:ATP hydrolysis activity"/>
    <property type="evidence" value="ECO:0007669"/>
    <property type="project" value="InterPro"/>
</dbReference>
<dbReference type="CDD" id="cd03258">
    <property type="entry name" value="ABC_MetN_methionine_transporter"/>
    <property type="match status" value="1"/>
</dbReference>
<dbReference type="Gene3D" id="3.30.70.260">
    <property type="match status" value="1"/>
</dbReference>
<dbReference type="Gene3D" id="3.40.50.300">
    <property type="entry name" value="P-loop containing nucleotide triphosphate hydrolases"/>
    <property type="match status" value="1"/>
</dbReference>
<dbReference type="InterPro" id="IPR003593">
    <property type="entry name" value="AAA+_ATPase"/>
</dbReference>
<dbReference type="InterPro" id="IPR003439">
    <property type="entry name" value="ABC_transporter-like_ATP-bd"/>
</dbReference>
<dbReference type="InterPro" id="IPR017871">
    <property type="entry name" value="ABC_transporter-like_CS"/>
</dbReference>
<dbReference type="InterPro" id="IPR045865">
    <property type="entry name" value="ACT-like_dom_sf"/>
</dbReference>
<dbReference type="InterPro" id="IPR041701">
    <property type="entry name" value="MetN_ABC"/>
</dbReference>
<dbReference type="InterPro" id="IPR050086">
    <property type="entry name" value="MetN_ABC_transporter-like"/>
</dbReference>
<dbReference type="InterPro" id="IPR018449">
    <property type="entry name" value="NIL_domain"/>
</dbReference>
<dbReference type="InterPro" id="IPR027417">
    <property type="entry name" value="P-loop_NTPase"/>
</dbReference>
<dbReference type="PANTHER" id="PTHR43166">
    <property type="entry name" value="AMINO ACID IMPORT ATP-BINDING PROTEIN"/>
    <property type="match status" value="1"/>
</dbReference>
<dbReference type="PANTHER" id="PTHR43166:SF30">
    <property type="entry name" value="METHIONINE IMPORT ATP-BINDING PROTEIN METN"/>
    <property type="match status" value="1"/>
</dbReference>
<dbReference type="Pfam" id="PF00005">
    <property type="entry name" value="ABC_tran"/>
    <property type="match status" value="1"/>
</dbReference>
<dbReference type="Pfam" id="PF09383">
    <property type="entry name" value="NIL"/>
    <property type="match status" value="1"/>
</dbReference>
<dbReference type="SMART" id="SM00382">
    <property type="entry name" value="AAA"/>
    <property type="match status" value="1"/>
</dbReference>
<dbReference type="SMART" id="SM00930">
    <property type="entry name" value="NIL"/>
    <property type="match status" value="1"/>
</dbReference>
<dbReference type="SUPFAM" id="SSF55021">
    <property type="entry name" value="ACT-like"/>
    <property type="match status" value="1"/>
</dbReference>
<dbReference type="SUPFAM" id="SSF52540">
    <property type="entry name" value="P-loop containing nucleoside triphosphate hydrolases"/>
    <property type="match status" value="1"/>
</dbReference>
<dbReference type="PROSITE" id="PS00211">
    <property type="entry name" value="ABC_TRANSPORTER_1"/>
    <property type="match status" value="1"/>
</dbReference>
<dbReference type="PROSITE" id="PS50893">
    <property type="entry name" value="ABC_TRANSPORTER_2"/>
    <property type="match status" value="1"/>
</dbReference>
<dbReference type="PROSITE" id="PS51264">
    <property type="entry name" value="METN"/>
    <property type="match status" value="1"/>
</dbReference>
<name>METN_LACLN</name>
<reference key="1">
    <citation type="journal article" date="1999" name="DNA Seq.">
        <title>Cloning, DNA sequence analysis, and deletion of a gene encoding diacetyl-acetoin reductase from Lactococcus lactis.</title>
        <authorList>
            <person name="Aungpraphapornchai P."/>
            <person name="Griffin H.G."/>
            <person name="Gasson M.J."/>
        </authorList>
    </citation>
    <scope>NUCLEOTIDE SEQUENCE [GENOMIC DNA]</scope>
    <source>
        <strain>NZ9000</strain>
    </source>
</reference>
<reference key="2">
    <citation type="journal article" date="2010" name="J. Bacteriol.">
        <title>Genome sequences of Lactococcus lactis MG1363 (revised) and NZ9000 and comparative physiological studies.</title>
        <authorList>
            <person name="Linares D.M."/>
            <person name="Kok J."/>
            <person name="Poolman B."/>
        </authorList>
    </citation>
    <scope>NUCLEOTIDE SEQUENCE [LARGE SCALE GENOMIC DNA]</scope>
    <source>
        <strain>NZ9000</strain>
    </source>
</reference>